<reference key="1">
    <citation type="journal article" date="1997" name="J. Bacteriol.">
        <title>A glgC gene essential only for the first of two spatially distinct phases of glycogen synthesis in Streptomyces coelicolor A3(2).</title>
        <authorList>
            <person name="Martin M.C."/>
            <person name="Schneider D."/>
            <person name="Bruton C.J."/>
            <person name="Chater K.F."/>
            <person name="Hardisson C."/>
        </authorList>
    </citation>
    <scope>NUCLEOTIDE SEQUENCE [GENOMIC DNA]</scope>
    <source>
        <strain>A3(2) / NRRL B-16638</strain>
    </source>
</reference>
<reference key="2">
    <citation type="journal article" date="2002" name="Nature">
        <title>Complete genome sequence of the model actinomycete Streptomyces coelicolor A3(2).</title>
        <authorList>
            <person name="Bentley S.D."/>
            <person name="Chater K.F."/>
            <person name="Cerdeno-Tarraga A.-M."/>
            <person name="Challis G.L."/>
            <person name="Thomson N.R."/>
            <person name="James K.D."/>
            <person name="Harris D.E."/>
            <person name="Quail M.A."/>
            <person name="Kieser H."/>
            <person name="Harper D."/>
            <person name="Bateman A."/>
            <person name="Brown S."/>
            <person name="Chandra G."/>
            <person name="Chen C.W."/>
            <person name="Collins M."/>
            <person name="Cronin A."/>
            <person name="Fraser A."/>
            <person name="Goble A."/>
            <person name="Hidalgo J."/>
            <person name="Hornsby T."/>
            <person name="Howarth S."/>
            <person name="Huang C.-H."/>
            <person name="Kieser T."/>
            <person name="Larke L."/>
            <person name="Murphy L.D."/>
            <person name="Oliver K."/>
            <person name="O'Neil S."/>
            <person name="Rabbinowitsch E."/>
            <person name="Rajandream M.A."/>
            <person name="Rutherford K.M."/>
            <person name="Rutter S."/>
            <person name="Seeger K."/>
            <person name="Saunders D."/>
            <person name="Sharp S."/>
            <person name="Squares R."/>
            <person name="Squares S."/>
            <person name="Taylor K."/>
            <person name="Warren T."/>
            <person name="Wietzorrek A."/>
            <person name="Woodward J.R."/>
            <person name="Barrell B.G."/>
            <person name="Parkhill J."/>
            <person name="Hopwood D.A."/>
        </authorList>
    </citation>
    <scope>NUCLEOTIDE SEQUENCE [LARGE SCALE GENOMIC DNA]</scope>
    <source>
        <strain>ATCC BAA-471 / A3(2) / M145</strain>
    </source>
</reference>
<sequence length="399" mass="42744">MLGIVLAGGEGKRLMPLTADRAKPAVTFGGTYRLVDFVLSNLVNGDILRICVLTQYKSHSLDRHITTTWRMSSLLGNYVTPVPAQQRLGPRWFLGSADAILQSLNLVHDEQPEYVAVFGADHVYRMDPRQMLAQHIESGAGVTVAGIRVPRAESPSFGVITPGSDGQTVTGFLEKPADPPGLADDPGCVFASMGNYVFTTKALVEALHRDAEDPDSVHDMGGSILPQLTDRGEAALYDFSANHVPGETTRDQGYWRDVGTLDAYYDAHMDLIAERPAFNLYNRDWPVYTHSTQLSPARFNAGGIASESIISAGCLIRGQVTRSVLSPGVVVDPGAVVQGSVLHDNVHIGRGAVVRGAVLDKNVQVPPGATIGVNPQRDGELYTVSKGGVIALGKGQRVP</sequence>
<keyword id="KW-0067">ATP-binding</keyword>
<keyword id="KW-0119">Carbohydrate metabolism</keyword>
<keyword id="KW-0320">Glycogen biosynthesis</keyword>
<keyword id="KW-0321">Glycogen metabolism</keyword>
<keyword id="KW-0547">Nucleotide-binding</keyword>
<keyword id="KW-0548">Nucleotidyltransferase</keyword>
<keyword id="KW-1185">Reference proteome</keyword>
<keyword id="KW-0808">Transferase</keyword>
<comment type="function">
    <text evidence="1">Involved in the biosynthesis of ADP-glucose, a building block required for the elongation reactions to produce glycogen. Catalyzes the reaction between ATP and alpha-D-glucose 1-phosphate (G1P) to produce pyrophosphate and ADP-Glc.</text>
</comment>
<comment type="catalytic activity">
    <reaction evidence="1">
        <text>alpha-D-glucose 1-phosphate + ATP + H(+) = ADP-alpha-D-glucose + diphosphate</text>
        <dbReference type="Rhea" id="RHEA:12120"/>
        <dbReference type="ChEBI" id="CHEBI:15378"/>
        <dbReference type="ChEBI" id="CHEBI:30616"/>
        <dbReference type="ChEBI" id="CHEBI:33019"/>
        <dbReference type="ChEBI" id="CHEBI:57498"/>
        <dbReference type="ChEBI" id="CHEBI:58601"/>
        <dbReference type="EC" id="2.7.7.27"/>
    </reaction>
</comment>
<comment type="pathway">
    <text evidence="1">Glycan biosynthesis; glycogen biosynthesis.</text>
</comment>
<comment type="subunit">
    <text evidence="1">Homotetramer.</text>
</comment>
<comment type="similarity">
    <text evidence="1">Belongs to the bacterial/plant glucose-1-phosphate adenylyltransferase family.</text>
</comment>
<feature type="chain" id="PRO_0000195333" description="Glucose-1-phosphate adenylyltransferase">
    <location>
        <begin position="1"/>
        <end position="399"/>
    </location>
</feature>
<feature type="binding site" evidence="1">
    <location>
        <position position="158"/>
    </location>
    <ligand>
        <name>alpha-D-glucose 1-phosphate</name>
        <dbReference type="ChEBI" id="CHEBI:58601"/>
    </ligand>
</feature>
<feature type="binding site" evidence="1">
    <location>
        <begin position="174"/>
        <end position="175"/>
    </location>
    <ligand>
        <name>alpha-D-glucose 1-phosphate</name>
        <dbReference type="ChEBI" id="CHEBI:58601"/>
    </ligand>
</feature>
<feature type="binding site" evidence="1">
    <location>
        <position position="192"/>
    </location>
    <ligand>
        <name>alpha-D-glucose 1-phosphate</name>
        <dbReference type="ChEBI" id="CHEBI:58601"/>
    </ligand>
</feature>
<feature type="sequence conflict" description="In Ref. 1; CAA61885." evidence="2" ref="1">
    <original>D</original>
    <variation>A</variation>
    <location>
        <position position="20"/>
    </location>
</feature>
<feature type="sequence conflict" description="In Ref. 1; CAA61885." evidence="2" ref="1">
    <original>FG</original>
    <variation>L</variation>
    <location>
        <begin position="157"/>
        <end position="158"/>
    </location>
</feature>
<feature type="sequence conflict" description="In Ref. 1; CAA61885." evidence="2" ref="1">
    <original>AD</original>
    <variation>PN</variation>
    <location>
        <begin position="177"/>
        <end position="178"/>
    </location>
</feature>
<feature type="sequence conflict" description="In Ref. 1; CAA61885." evidence="2" ref="1">
    <original>AD</original>
    <variation>GH</variation>
    <location>
        <begin position="183"/>
        <end position="184"/>
    </location>
</feature>
<feature type="sequence conflict" description="In Ref. 1; CAA61885." evidence="2" ref="1">
    <original>A</original>
    <variation>P</variation>
    <location>
        <position position="191"/>
    </location>
</feature>
<feature type="sequence conflict" description="In Ref. 1; CAA61885." evidence="2" ref="1">
    <original>H</original>
    <variation>Y</variation>
    <location>
        <position position="268"/>
    </location>
</feature>
<feature type="sequence conflict" description="In Ref. 1; CAA61885." evidence="2" ref="1">
    <location>
        <position position="344"/>
    </location>
</feature>
<dbReference type="EC" id="2.7.7.27" evidence="1"/>
<dbReference type="EMBL" id="X89733">
    <property type="protein sequence ID" value="CAA61885.1"/>
    <property type="molecule type" value="Genomic_DNA"/>
</dbReference>
<dbReference type="EMBL" id="AL939107">
    <property type="protein sequence ID" value="CAB61927.1"/>
    <property type="molecule type" value="Genomic_DNA"/>
</dbReference>
<dbReference type="PIR" id="T42041">
    <property type="entry name" value="T42041"/>
</dbReference>
<dbReference type="RefSeq" id="NP_625258.2">
    <property type="nucleotide sequence ID" value="NC_003888.3"/>
</dbReference>
<dbReference type="SMR" id="P72394"/>
<dbReference type="FunCoup" id="P72394">
    <property type="interactions" value="126"/>
</dbReference>
<dbReference type="STRING" id="100226.gene:17758544"/>
<dbReference type="PaxDb" id="100226-SCO0961"/>
<dbReference type="KEGG" id="sco:SCO0961"/>
<dbReference type="PATRIC" id="fig|100226.15.peg.958"/>
<dbReference type="eggNOG" id="COG0448">
    <property type="taxonomic scope" value="Bacteria"/>
</dbReference>
<dbReference type="HOGENOM" id="CLU_029499_14_1_11"/>
<dbReference type="InParanoid" id="P72394"/>
<dbReference type="OrthoDB" id="9801810at2"/>
<dbReference type="PhylomeDB" id="P72394"/>
<dbReference type="BRENDA" id="2.7.7.27">
    <property type="organism ID" value="5998"/>
</dbReference>
<dbReference type="UniPathway" id="UPA00164"/>
<dbReference type="Proteomes" id="UP000001973">
    <property type="component" value="Chromosome"/>
</dbReference>
<dbReference type="GO" id="GO:0005524">
    <property type="term" value="F:ATP binding"/>
    <property type="evidence" value="ECO:0007669"/>
    <property type="project" value="UniProtKB-KW"/>
</dbReference>
<dbReference type="GO" id="GO:0008878">
    <property type="term" value="F:glucose-1-phosphate adenylyltransferase activity"/>
    <property type="evidence" value="ECO:0007669"/>
    <property type="project" value="UniProtKB-UniRule"/>
</dbReference>
<dbReference type="GO" id="GO:0005978">
    <property type="term" value="P:glycogen biosynthetic process"/>
    <property type="evidence" value="ECO:0007669"/>
    <property type="project" value="UniProtKB-UniRule"/>
</dbReference>
<dbReference type="CDD" id="cd02508">
    <property type="entry name" value="ADP_Glucose_PP"/>
    <property type="match status" value="1"/>
</dbReference>
<dbReference type="CDD" id="cd04651">
    <property type="entry name" value="LbH_G1P_AT_C"/>
    <property type="match status" value="1"/>
</dbReference>
<dbReference type="Gene3D" id="2.160.10.10">
    <property type="entry name" value="Hexapeptide repeat proteins"/>
    <property type="match status" value="1"/>
</dbReference>
<dbReference type="Gene3D" id="3.90.550.10">
    <property type="entry name" value="Spore Coat Polysaccharide Biosynthesis Protein SpsA, Chain A"/>
    <property type="match status" value="1"/>
</dbReference>
<dbReference type="HAMAP" id="MF_00624">
    <property type="entry name" value="GlgC"/>
    <property type="match status" value="1"/>
</dbReference>
<dbReference type="InterPro" id="IPR011831">
    <property type="entry name" value="ADP-Glc_PPase"/>
</dbReference>
<dbReference type="InterPro" id="IPR005836">
    <property type="entry name" value="ADP_Glu_pyroP_CS"/>
</dbReference>
<dbReference type="InterPro" id="IPR023049">
    <property type="entry name" value="GlgC_bac"/>
</dbReference>
<dbReference type="InterPro" id="IPR056818">
    <property type="entry name" value="GlmU/GlgC-like_hexapep"/>
</dbReference>
<dbReference type="InterPro" id="IPR005835">
    <property type="entry name" value="NTP_transferase_dom"/>
</dbReference>
<dbReference type="InterPro" id="IPR029044">
    <property type="entry name" value="Nucleotide-diphossugar_trans"/>
</dbReference>
<dbReference type="InterPro" id="IPR011004">
    <property type="entry name" value="Trimer_LpxA-like_sf"/>
</dbReference>
<dbReference type="NCBIfam" id="TIGR02091">
    <property type="entry name" value="glgC"/>
    <property type="match status" value="1"/>
</dbReference>
<dbReference type="NCBIfam" id="NF002023">
    <property type="entry name" value="PRK00844.1"/>
    <property type="match status" value="1"/>
</dbReference>
<dbReference type="PANTHER" id="PTHR43523:SF2">
    <property type="entry name" value="GLUCOSE-1-PHOSPHATE ADENYLYLTRANSFERASE"/>
    <property type="match status" value="1"/>
</dbReference>
<dbReference type="PANTHER" id="PTHR43523">
    <property type="entry name" value="GLUCOSE-1-PHOSPHATE ADENYLYLTRANSFERASE-RELATED"/>
    <property type="match status" value="1"/>
</dbReference>
<dbReference type="Pfam" id="PF24894">
    <property type="entry name" value="Hexapep_GlmU"/>
    <property type="match status" value="1"/>
</dbReference>
<dbReference type="Pfam" id="PF00483">
    <property type="entry name" value="NTP_transferase"/>
    <property type="match status" value="1"/>
</dbReference>
<dbReference type="SUPFAM" id="SSF53448">
    <property type="entry name" value="Nucleotide-diphospho-sugar transferases"/>
    <property type="match status" value="1"/>
</dbReference>
<dbReference type="SUPFAM" id="SSF51161">
    <property type="entry name" value="Trimeric LpxA-like enzymes"/>
    <property type="match status" value="1"/>
</dbReference>
<dbReference type="PROSITE" id="PS00808">
    <property type="entry name" value="ADP_GLC_PYROPHOSPH_1"/>
    <property type="match status" value="1"/>
</dbReference>
<dbReference type="PROSITE" id="PS00809">
    <property type="entry name" value="ADP_GLC_PYROPHOSPH_2"/>
    <property type="match status" value="1"/>
</dbReference>
<dbReference type="PROSITE" id="PS00810">
    <property type="entry name" value="ADP_GLC_PYROPHOSPH_3"/>
    <property type="match status" value="1"/>
</dbReference>
<accession>P72394</accession>
<accession>Q9RIU5</accession>
<evidence type="ECO:0000255" key="1">
    <source>
        <dbReference type="HAMAP-Rule" id="MF_00624"/>
    </source>
</evidence>
<evidence type="ECO:0000305" key="2"/>
<protein>
    <recommendedName>
        <fullName evidence="1">Glucose-1-phosphate adenylyltransferase</fullName>
        <ecNumber evidence="1">2.7.7.27</ecNumber>
    </recommendedName>
    <alternativeName>
        <fullName evidence="1">ADP-glucose pyrophosphorylase</fullName>
        <shortName evidence="1">ADPGlc PPase</shortName>
    </alternativeName>
    <alternativeName>
        <fullName evidence="1">ADP-glucose synthase</fullName>
    </alternativeName>
</protein>
<name>GLGC_STRCO</name>
<organism>
    <name type="scientific">Streptomyces coelicolor (strain ATCC BAA-471 / A3(2) / M145)</name>
    <dbReference type="NCBI Taxonomy" id="100226"/>
    <lineage>
        <taxon>Bacteria</taxon>
        <taxon>Bacillati</taxon>
        <taxon>Actinomycetota</taxon>
        <taxon>Actinomycetes</taxon>
        <taxon>Kitasatosporales</taxon>
        <taxon>Streptomycetaceae</taxon>
        <taxon>Streptomyces</taxon>
        <taxon>Streptomyces albidoflavus group</taxon>
    </lineage>
</organism>
<proteinExistence type="inferred from homology"/>
<gene>
    <name evidence="1" type="primary">glgC</name>
    <name type="ordered locus">SCO0961</name>
    <name type="ORF">SCM11.16c</name>
</gene>